<gene>
    <name type="primary">bla</name>
    <name type="synonym">shv29</name>
</gene>
<dbReference type="EC" id="3.5.2.6"/>
<dbReference type="EMBL" id="AF301532">
    <property type="protein sequence ID" value="AAG49894.1"/>
    <property type="molecule type" value="Genomic_DNA"/>
</dbReference>
<dbReference type="RefSeq" id="WP_063864672.1">
    <property type="nucleotide sequence ID" value="NG_050066.1"/>
</dbReference>
<dbReference type="SMR" id="Q9AHN9"/>
<dbReference type="CARD" id="ARO:3001087">
    <property type="molecule name" value="SHV-29"/>
    <property type="mechanism identifier" value="ARO:0001004"/>
    <property type="mechanism name" value="antibiotic inactivation"/>
</dbReference>
<dbReference type="KEGG" id="ag:AAG49894"/>
<dbReference type="GO" id="GO:0008800">
    <property type="term" value="F:beta-lactamase activity"/>
    <property type="evidence" value="ECO:0007669"/>
    <property type="project" value="UniProtKB-EC"/>
</dbReference>
<dbReference type="GO" id="GO:0030655">
    <property type="term" value="P:beta-lactam antibiotic catabolic process"/>
    <property type="evidence" value="ECO:0007669"/>
    <property type="project" value="InterPro"/>
</dbReference>
<dbReference type="GO" id="GO:0046677">
    <property type="term" value="P:response to antibiotic"/>
    <property type="evidence" value="ECO:0007669"/>
    <property type="project" value="UniProtKB-KW"/>
</dbReference>
<dbReference type="Gene3D" id="3.40.710.10">
    <property type="entry name" value="DD-peptidase/beta-lactamase superfamily"/>
    <property type="match status" value="1"/>
</dbReference>
<dbReference type="InterPro" id="IPR012338">
    <property type="entry name" value="Beta-lactam/transpept-like"/>
</dbReference>
<dbReference type="InterPro" id="IPR045155">
    <property type="entry name" value="Beta-lactam_cat"/>
</dbReference>
<dbReference type="InterPro" id="IPR000871">
    <property type="entry name" value="Beta-lactam_class-A"/>
</dbReference>
<dbReference type="InterPro" id="IPR023650">
    <property type="entry name" value="Beta-lactam_class-A_AS"/>
</dbReference>
<dbReference type="NCBIfam" id="NF033103">
    <property type="entry name" value="bla_class_A"/>
    <property type="match status" value="1"/>
</dbReference>
<dbReference type="NCBIfam" id="NF000285">
    <property type="entry name" value="SHV"/>
    <property type="match status" value="1"/>
</dbReference>
<dbReference type="NCBIfam" id="NF012143">
    <property type="entry name" value="SHV_LEN_OKP"/>
    <property type="match status" value="1"/>
</dbReference>
<dbReference type="PANTHER" id="PTHR35333">
    <property type="entry name" value="BETA-LACTAMASE"/>
    <property type="match status" value="1"/>
</dbReference>
<dbReference type="PANTHER" id="PTHR35333:SF3">
    <property type="entry name" value="BETA-LACTAMASE-TYPE TRANSPEPTIDASE FOLD CONTAINING PROTEIN"/>
    <property type="match status" value="1"/>
</dbReference>
<dbReference type="Pfam" id="PF13354">
    <property type="entry name" value="Beta-lactamase2"/>
    <property type="match status" value="1"/>
</dbReference>
<dbReference type="PRINTS" id="PR00118">
    <property type="entry name" value="BLACTAMASEA"/>
</dbReference>
<dbReference type="SUPFAM" id="SSF56601">
    <property type="entry name" value="beta-lactamase/transpeptidase-like"/>
    <property type="match status" value="1"/>
</dbReference>
<dbReference type="PROSITE" id="PS00146">
    <property type="entry name" value="BETA_LACTAMASE_A"/>
    <property type="match status" value="1"/>
</dbReference>
<protein>
    <recommendedName>
        <fullName>Beta-lactamase SHV-29</fullName>
        <ecNumber>3.5.2.6</ecNumber>
    </recommendedName>
</protein>
<evidence type="ECO:0000250" key="1"/>
<evidence type="ECO:0000255" key="2"/>
<evidence type="ECO:0000255" key="3">
    <source>
        <dbReference type="PROSITE-ProRule" id="PRU10101"/>
    </source>
</evidence>
<evidence type="ECO:0000305" key="4"/>
<evidence type="ECO:0000305" key="5">
    <source>
    </source>
</evidence>
<sequence>MRYIRLCIISLLATLPLAVHASPQPLEQIKQSESQLSGSVGMIEMDLASGRTLTAWRADERFPMMSTFKVVLCGAVLARVDAGDEQLERKIHYRQQDLVDYSPVSEKHLADGMTVGELCAAAITMSDNSAANLLLATVGGPAGLTAFLRQIGDNVTRLDRWETELNEALPGDARDTTTPASMAATLRKLLTSQRLSARSQRQLLQWMVDDRVAGPLIRSVLPAGWFIADKTGAAERGARGIVALLGPNNKAERIVVIYLRDTPASMAERNQQIAGIGAALIEHWQR</sequence>
<organism>
    <name type="scientific">Klebsiella pneumoniae</name>
    <dbReference type="NCBI Taxonomy" id="573"/>
    <lineage>
        <taxon>Bacteria</taxon>
        <taxon>Pseudomonadati</taxon>
        <taxon>Pseudomonadota</taxon>
        <taxon>Gammaproteobacteria</taxon>
        <taxon>Enterobacterales</taxon>
        <taxon>Enterobacteriaceae</taxon>
        <taxon>Klebsiella/Raoultella group</taxon>
        <taxon>Klebsiella</taxon>
        <taxon>Klebsiella pneumoniae complex</taxon>
    </lineage>
</organism>
<accession>Q9AHN9</accession>
<reference key="1">
    <citation type="journal article" date="2001" name="Antimicrob. Agents Chemother.">
        <title>Novel carbapenem-hydrolyzing beta-lactamase, KPC-1, from a carbapenem-resistant strain of Klebsiella pneumoniae.</title>
        <authorList>
            <person name="Yigit H."/>
            <person name="Queenan A.M."/>
            <person name="Anderson G.J."/>
            <person name="Domenech-Sanchez A."/>
            <person name="Biddle J.W."/>
            <person name="Steward C.D."/>
            <person name="Alberti S."/>
            <person name="Bush K."/>
            <person name="Tenover F.C."/>
        </authorList>
    </citation>
    <scope>NUCLEOTIDE SEQUENCE [GENOMIC DNA]</scope>
    <source>
        <strain>1534</strain>
    </source>
</reference>
<reference key="2">
    <citation type="journal article" date="1991" name="Biochem. J.">
        <title>A standard numbering scheme for the class A beta-lactamases.</title>
        <authorList>
            <person name="Ambler R.P."/>
            <person name="Coulson A.F."/>
            <person name="Frere J.M."/>
            <person name="Ghuysen J.M."/>
            <person name="Joris B."/>
            <person name="Forsman M."/>
            <person name="Levesque R.C."/>
            <person name="Tiraby G."/>
            <person name="Waley S.G."/>
        </authorList>
    </citation>
    <scope>AMINO ACID NUMBERING SCHEME</scope>
</reference>
<feature type="signal peptide" evidence="2">
    <location>
        <begin position="1"/>
        <end position="21"/>
    </location>
</feature>
<feature type="chain" id="PRO_0000349141" description="Beta-lactamase SHV-29">
    <location>
        <begin position="22"/>
        <end position="286"/>
    </location>
</feature>
<feature type="active site" description="Acyl-ester intermediate" evidence="3">
    <location>
        <position position="66"/>
    </location>
</feature>
<feature type="active site" description="Proton acceptor" evidence="1">
    <location>
        <position position="164"/>
    </location>
</feature>
<feature type="binding site" evidence="1">
    <location>
        <begin position="230"/>
        <end position="232"/>
    </location>
    <ligand>
        <name>substrate</name>
    </ligand>
</feature>
<feature type="disulfide bond" evidence="1">
    <location>
        <begin position="73"/>
        <end position="119"/>
    </location>
</feature>
<name>BLA29_KLEPN</name>
<keyword id="KW-0046">Antibiotic resistance</keyword>
<keyword id="KW-1015">Disulfide bond</keyword>
<keyword id="KW-0378">Hydrolase</keyword>
<keyword id="KW-0732">Signal</keyword>
<comment type="catalytic activity">
    <reaction evidence="3">
        <text>a beta-lactam + H2O = a substituted beta-amino acid</text>
        <dbReference type="Rhea" id="RHEA:20401"/>
        <dbReference type="ChEBI" id="CHEBI:15377"/>
        <dbReference type="ChEBI" id="CHEBI:35627"/>
        <dbReference type="ChEBI" id="CHEBI:140347"/>
        <dbReference type="EC" id="3.5.2.6"/>
    </reaction>
</comment>
<comment type="miscellaneous">
    <text evidence="5">The class A beta-lactamase family has a specific amino-acid numbering system, sometimes called Ambler or ABL numbering and often misspelt as Amber. A multiple sequence alignment was used to derive a consensus sequence and then the consensus was numbered taking into account insertions and deletions. This allows use of identical numbers, e.g. for active site residues, despite differences in protein length. UniProt always uses natural numbering of residues, hence there appear to be differences in numbering between this entry and some papers.</text>
</comment>
<comment type="similarity">
    <text evidence="4">Belongs to the class-A beta-lactamase family.</text>
</comment>
<proteinExistence type="inferred from homology"/>